<keyword id="KW-0012">Acyltransferase</keyword>
<keyword id="KW-0156">Chromatin regulator</keyword>
<keyword id="KW-0158">Chromosome</keyword>
<keyword id="KW-0479">Metal-binding</keyword>
<keyword id="KW-0520">NAD</keyword>
<keyword id="KW-0539">Nucleus</keyword>
<keyword id="KW-1185">Reference proteome</keyword>
<keyword id="KW-0808">Transferase</keyword>
<keyword id="KW-0862">Zinc</keyword>
<dbReference type="EC" id="2.3.1.286" evidence="2 4"/>
<dbReference type="EMBL" id="AE014297">
    <property type="protein sequence ID" value="AAF54513.2"/>
    <property type="status" value="ALT_SEQ"/>
    <property type="molecule type" value="Genomic_DNA"/>
</dbReference>
<dbReference type="EMBL" id="BT126234">
    <property type="protein sequence ID" value="AEB33520.1"/>
    <property type="status" value="ALT_INIT"/>
    <property type="molecule type" value="mRNA"/>
</dbReference>
<dbReference type="RefSeq" id="NP_649990.2">
    <property type="nucleotide sequence ID" value="NM_141733.3"/>
</dbReference>
<dbReference type="SMR" id="Q9VH08"/>
<dbReference type="BioGRID" id="66403">
    <property type="interactions" value="3"/>
</dbReference>
<dbReference type="FunCoup" id="Q9VH08">
    <property type="interactions" value="743"/>
</dbReference>
<dbReference type="STRING" id="7227.FBpp0293897"/>
<dbReference type="PaxDb" id="7227-FBpp0293897"/>
<dbReference type="EnsemblMetazoa" id="FBtr0305358">
    <property type="protein sequence ID" value="FBpp0293897"/>
    <property type="gene ID" value="FBgn0037802"/>
</dbReference>
<dbReference type="GeneID" id="41254"/>
<dbReference type="KEGG" id="dme:Dmel_CG6284"/>
<dbReference type="UCSC" id="CG6284-RA">
    <property type="organism name" value="d. melanogaster"/>
</dbReference>
<dbReference type="AGR" id="FB:FBgn0037802"/>
<dbReference type="CTD" id="51548"/>
<dbReference type="FlyBase" id="FBgn0037802">
    <property type="gene designation" value="Sirt6"/>
</dbReference>
<dbReference type="VEuPathDB" id="VectorBase:FBgn0037802"/>
<dbReference type="eggNOG" id="KOG1905">
    <property type="taxonomic scope" value="Eukaryota"/>
</dbReference>
<dbReference type="GeneTree" id="ENSGT00940000160088"/>
<dbReference type="HOGENOM" id="CLU_023643_6_0_1"/>
<dbReference type="InParanoid" id="Q9VH08"/>
<dbReference type="OrthoDB" id="2919105at2759"/>
<dbReference type="PhylomeDB" id="Q9VH08"/>
<dbReference type="BioGRID-ORCS" id="41254">
    <property type="hits" value="0 hits in 1 CRISPR screen"/>
</dbReference>
<dbReference type="ChiTaRS" id="Sirt6">
    <property type="organism name" value="fly"/>
</dbReference>
<dbReference type="GenomeRNAi" id="41254"/>
<dbReference type="PRO" id="PR:Q9VH08"/>
<dbReference type="Proteomes" id="UP000000803">
    <property type="component" value="Chromosome 3R"/>
</dbReference>
<dbReference type="Bgee" id="FBgn0037802">
    <property type="expression patterns" value="Expressed in adult abdomen and 26 other cell types or tissues"/>
</dbReference>
<dbReference type="GO" id="GO:0000785">
    <property type="term" value="C:chromatin"/>
    <property type="evidence" value="ECO:0000314"/>
    <property type="project" value="UniProtKB"/>
</dbReference>
<dbReference type="GO" id="GO:0005634">
    <property type="term" value="C:nucleus"/>
    <property type="evidence" value="ECO:0000314"/>
    <property type="project" value="UniProtKB"/>
</dbReference>
<dbReference type="GO" id="GO:0004407">
    <property type="term" value="F:histone deacetylase activity"/>
    <property type="evidence" value="ECO:0000315"/>
    <property type="project" value="FlyBase"/>
</dbReference>
<dbReference type="GO" id="GO:0017136">
    <property type="term" value="F:histone deacetylase activity, NAD-dependent"/>
    <property type="evidence" value="ECO:0000303"/>
    <property type="project" value="FlyBase"/>
</dbReference>
<dbReference type="GO" id="GO:0046969">
    <property type="term" value="F:histone H3K9 deacetylase activity, NAD-dependent"/>
    <property type="evidence" value="ECO:0000314"/>
    <property type="project" value="UniProtKB"/>
</dbReference>
<dbReference type="GO" id="GO:0046872">
    <property type="term" value="F:metal ion binding"/>
    <property type="evidence" value="ECO:0007669"/>
    <property type="project" value="UniProtKB-KW"/>
</dbReference>
<dbReference type="GO" id="GO:0070403">
    <property type="term" value="F:NAD+ binding"/>
    <property type="evidence" value="ECO:0000318"/>
    <property type="project" value="GO_Central"/>
</dbReference>
<dbReference type="GO" id="GO:0003714">
    <property type="term" value="F:transcription corepressor activity"/>
    <property type="evidence" value="ECO:0000318"/>
    <property type="project" value="GO_Central"/>
</dbReference>
<dbReference type="GO" id="GO:0006325">
    <property type="term" value="P:chromatin organization"/>
    <property type="evidence" value="ECO:0007669"/>
    <property type="project" value="UniProtKB-KW"/>
</dbReference>
<dbReference type="GO" id="GO:0008340">
    <property type="term" value="P:determination of adult lifespan"/>
    <property type="evidence" value="ECO:0000314"/>
    <property type="project" value="UniProtKB"/>
</dbReference>
<dbReference type="GO" id="GO:0031452">
    <property type="term" value="P:negative regulation of heterochromatin formation"/>
    <property type="evidence" value="ECO:0000315"/>
    <property type="project" value="FlyBase"/>
</dbReference>
<dbReference type="GO" id="GO:0000122">
    <property type="term" value="P:negative regulation of transcription by RNA polymerase II"/>
    <property type="evidence" value="ECO:0000314"/>
    <property type="project" value="UniProtKB"/>
</dbReference>
<dbReference type="CDD" id="cd01410">
    <property type="entry name" value="SIRT7"/>
    <property type="match status" value="1"/>
</dbReference>
<dbReference type="FunFam" id="3.40.50.1220:FF:000038">
    <property type="entry name" value="NAD-dependent protein deacetylase sirtuin-6 isoform X2"/>
    <property type="match status" value="1"/>
</dbReference>
<dbReference type="Gene3D" id="2.20.28.200">
    <property type="match status" value="1"/>
</dbReference>
<dbReference type="Gene3D" id="3.40.50.1220">
    <property type="entry name" value="TPP-binding domain"/>
    <property type="match status" value="1"/>
</dbReference>
<dbReference type="InterPro" id="IPR029035">
    <property type="entry name" value="DHS-like_NAD/FAD-binding_dom"/>
</dbReference>
<dbReference type="InterPro" id="IPR050134">
    <property type="entry name" value="NAD-dep_sirtuin_deacylases"/>
</dbReference>
<dbReference type="InterPro" id="IPR003000">
    <property type="entry name" value="Sirtuin"/>
</dbReference>
<dbReference type="InterPro" id="IPR026590">
    <property type="entry name" value="Ssirtuin_cat_dom"/>
</dbReference>
<dbReference type="PANTHER" id="PTHR11085">
    <property type="entry name" value="NAD-DEPENDENT PROTEIN DEACYLASE SIRTUIN-5, MITOCHONDRIAL-RELATED"/>
    <property type="match status" value="1"/>
</dbReference>
<dbReference type="PANTHER" id="PTHR11085:SF12">
    <property type="entry name" value="NAD-DEPENDENT PROTEIN DEACYLASE SIRTUIN-6"/>
    <property type="match status" value="1"/>
</dbReference>
<dbReference type="Pfam" id="PF02146">
    <property type="entry name" value="SIR2"/>
    <property type="match status" value="1"/>
</dbReference>
<dbReference type="SUPFAM" id="SSF52467">
    <property type="entry name" value="DHS-like NAD/FAD-binding domain"/>
    <property type="match status" value="1"/>
</dbReference>
<dbReference type="PROSITE" id="PS50305">
    <property type="entry name" value="SIRTUIN"/>
    <property type="match status" value="1"/>
</dbReference>
<feature type="chain" id="PRO_0000417362" description="NAD-dependent protein deacetylase Sirt6">
    <location>
        <begin position="1"/>
        <end position="317"/>
    </location>
</feature>
<feature type="domain" description="Deacetylase sirtuin-type" evidence="2">
    <location>
        <begin position="27"/>
        <end position="273"/>
    </location>
</feature>
<feature type="active site" description="Proton acceptor" evidence="2">
    <location>
        <position position="133"/>
    </location>
</feature>
<feature type="binding site" evidence="1">
    <location>
        <position position="53"/>
    </location>
    <ligand>
        <name>NAD(+)</name>
        <dbReference type="ChEBI" id="CHEBI:57540"/>
    </ligand>
</feature>
<feature type="binding site" evidence="1">
    <location>
        <position position="57"/>
    </location>
    <ligand>
        <name>NAD(+)</name>
        <dbReference type="ChEBI" id="CHEBI:57540"/>
    </ligand>
</feature>
<feature type="binding site" evidence="1">
    <location>
        <position position="64"/>
    </location>
    <ligand>
        <name>NAD(+)</name>
        <dbReference type="ChEBI" id="CHEBI:57540"/>
    </ligand>
</feature>
<feature type="binding site" evidence="1">
    <location>
        <position position="65"/>
    </location>
    <ligand>
        <name>NAD(+)</name>
        <dbReference type="ChEBI" id="CHEBI:57540"/>
    </ligand>
</feature>
<feature type="binding site" evidence="1">
    <location>
        <position position="71"/>
    </location>
    <ligand>
        <name>NAD(+)</name>
        <dbReference type="ChEBI" id="CHEBI:57540"/>
    </ligand>
</feature>
<feature type="binding site" evidence="1">
    <location>
        <position position="113"/>
    </location>
    <ligand>
        <name>NAD(+)</name>
        <dbReference type="ChEBI" id="CHEBI:57540"/>
    </ligand>
</feature>
<feature type="binding site" evidence="1">
    <location>
        <position position="133"/>
    </location>
    <ligand>
        <name>NAD(+)</name>
        <dbReference type="ChEBI" id="CHEBI:57540"/>
    </ligand>
</feature>
<feature type="binding site" evidence="2">
    <location>
        <position position="141"/>
    </location>
    <ligand>
        <name>Zn(2+)</name>
        <dbReference type="ChEBI" id="CHEBI:29105"/>
    </ligand>
</feature>
<feature type="binding site" evidence="2">
    <location>
        <position position="144"/>
    </location>
    <ligand>
        <name>Zn(2+)</name>
        <dbReference type="ChEBI" id="CHEBI:29105"/>
    </ligand>
</feature>
<feature type="binding site" evidence="2">
    <location>
        <position position="166"/>
    </location>
    <ligand>
        <name>Zn(2+)</name>
        <dbReference type="ChEBI" id="CHEBI:29105"/>
    </ligand>
</feature>
<feature type="binding site" evidence="2">
    <location>
        <position position="177"/>
    </location>
    <ligand>
        <name>Zn(2+)</name>
        <dbReference type="ChEBI" id="CHEBI:29105"/>
    </ligand>
</feature>
<feature type="binding site" evidence="1">
    <location>
        <position position="215"/>
    </location>
    <ligand>
        <name>NAD(+)</name>
        <dbReference type="ChEBI" id="CHEBI:57540"/>
    </ligand>
</feature>
<feature type="binding site" evidence="1">
    <location>
        <position position="241"/>
    </location>
    <ligand>
        <name>NAD(+)</name>
        <dbReference type="ChEBI" id="CHEBI:57540"/>
    </ligand>
</feature>
<feature type="binding site" evidence="1">
    <location>
        <position position="243"/>
    </location>
    <ligand>
        <name>NAD(+)</name>
        <dbReference type="ChEBI" id="CHEBI:57540"/>
    </ligand>
</feature>
<feature type="binding site" evidence="1">
    <location>
        <position position="259"/>
    </location>
    <ligand>
        <name>NAD(+)</name>
        <dbReference type="ChEBI" id="CHEBI:57540"/>
    </ligand>
</feature>
<gene>
    <name evidence="5 7" type="primary">Sirt6</name>
    <name evidence="7" type="ORF">CG6284</name>
</gene>
<comment type="function">
    <text evidence="3 4">NAD-dependent histone deacylase that acts as a regulator of life span.</text>
</comment>
<comment type="catalytic activity">
    <reaction evidence="2 4">
        <text>N(6)-acetyl-L-lysyl-[protein] + NAD(+) + H2O = 2''-O-acetyl-ADP-D-ribose + nicotinamide + L-lysyl-[protein]</text>
        <dbReference type="Rhea" id="RHEA:43636"/>
        <dbReference type="Rhea" id="RHEA-COMP:9752"/>
        <dbReference type="Rhea" id="RHEA-COMP:10731"/>
        <dbReference type="ChEBI" id="CHEBI:15377"/>
        <dbReference type="ChEBI" id="CHEBI:17154"/>
        <dbReference type="ChEBI" id="CHEBI:29969"/>
        <dbReference type="ChEBI" id="CHEBI:57540"/>
        <dbReference type="ChEBI" id="CHEBI:61930"/>
        <dbReference type="ChEBI" id="CHEBI:83767"/>
        <dbReference type="EC" id="2.3.1.286"/>
    </reaction>
</comment>
<comment type="cofactor">
    <cofactor evidence="1">
        <name>Zn(2+)</name>
        <dbReference type="ChEBI" id="CHEBI:29105"/>
    </cofactor>
    <text evidence="1">Binds 1 zinc ion per subunit.</text>
</comment>
<comment type="subcellular location">
    <subcellularLocation>
        <location evidence="4">Nucleus</location>
    </subcellularLocation>
    <subcellularLocation>
        <location evidence="4">Chromosome</location>
    </subcellularLocation>
    <text evidence="4">Predominantly nuclear; associated with chromatin.</text>
</comment>
<comment type="tissue specificity">
    <text evidence="4">Widely expressed.</text>
</comment>
<comment type="disruption phenotype">
    <text evidence="3">Causes lethality during development (PubMed:17159295). Induced silencing shortens life span (PubMed:17159295).</text>
</comment>
<comment type="miscellaneous">
    <text evidence="4">Overexpression in flies produces robust lifespan extension in both sexes.</text>
</comment>
<comment type="similarity">
    <text evidence="6">Belongs to the sirtuin family. Class IV subfamily.</text>
</comment>
<comment type="sequence caution" evidence="6">
    <conflict type="erroneous gene model prediction">
        <sequence resource="EMBL-CDS" id="AAF54513"/>
    </conflict>
</comment>
<comment type="sequence caution" evidence="6">
    <conflict type="erroneous initiation">
        <sequence resource="EMBL-CDS" id="AEB33520"/>
    </conflict>
    <text>Extended N-terminus.</text>
</comment>
<name>SIR6_DROME</name>
<organism>
    <name type="scientific">Drosophila melanogaster</name>
    <name type="common">Fruit fly</name>
    <dbReference type="NCBI Taxonomy" id="7227"/>
    <lineage>
        <taxon>Eukaryota</taxon>
        <taxon>Metazoa</taxon>
        <taxon>Ecdysozoa</taxon>
        <taxon>Arthropoda</taxon>
        <taxon>Hexapoda</taxon>
        <taxon>Insecta</taxon>
        <taxon>Pterygota</taxon>
        <taxon>Neoptera</taxon>
        <taxon>Endopterygota</taxon>
        <taxon>Diptera</taxon>
        <taxon>Brachycera</taxon>
        <taxon>Muscomorpha</taxon>
        <taxon>Ephydroidea</taxon>
        <taxon>Drosophilidae</taxon>
        <taxon>Drosophila</taxon>
        <taxon>Sophophora</taxon>
    </lineage>
</organism>
<reference key="1">
    <citation type="journal article" date="2000" name="Science">
        <title>The genome sequence of Drosophila melanogaster.</title>
        <authorList>
            <person name="Adams M.D."/>
            <person name="Celniker S.E."/>
            <person name="Holt R.A."/>
            <person name="Evans C.A."/>
            <person name="Gocayne J.D."/>
            <person name="Amanatides P.G."/>
            <person name="Scherer S.E."/>
            <person name="Li P.W."/>
            <person name="Hoskins R.A."/>
            <person name="Galle R.F."/>
            <person name="George R.A."/>
            <person name="Lewis S.E."/>
            <person name="Richards S."/>
            <person name="Ashburner M."/>
            <person name="Henderson S.N."/>
            <person name="Sutton G.G."/>
            <person name="Wortman J.R."/>
            <person name="Yandell M.D."/>
            <person name="Zhang Q."/>
            <person name="Chen L.X."/>
            <person name="Brandon R.C."/>
            <person name="Rogers Y.-H.C."/>
            <person name="Blazej R.G."/>
            <person name="Champe M."/>
            <person name="Pfeiffer B.D."/>
            <person name="Wan K.H."/>
            <person name="Doyle C."/>
            <person name="Baxter E.G."/>
            <person name="Helt G."/>
            <person name="Nelson C.R."/>
            <person name="Miklos G.L.G."/>
            <person name="Abril J.F."/>
            <person name="Agbayani A."/>
            <person name="An H.-J."/>
            <person name="Andrews-Pfannkoch C."/>
            <person name="Baldwin D."/>
            <person name="Ballew R.M."/>
            <person name="Basu A."/>
            <person name="Baxendale J."/>
            <person name="Bayraktaroglu L."/>
            <person name="Beasley E.M."/>
            <person name="Beeson K.Y."/>
            <person name="Benos P.V."/>
            <person name="Berman B.P."/>
            <person name="Bhandari D."/>
            <person name="Bolshakov S."/>
            <person name="Borkova D."/>
            <person name="Botchan M.R."/>
            <person name="Bouck J."/>
            <person name="Brokstein P."/>
            <person name="Brottier P."/>
            <person name="Burtis K.C."/>
            <person name="Busam D.A."/>
            <person name="Butler H."/>
            <person name="Cadieu E."/>
            <person name="Center A."/>
            <person name="Chandra I."/>
            <person name="Cherry J.M."/>
            <person name="Cawley S."/>
            <person name="Dahlke C."/>
            <person name="Davenport L.B."/>
            <person name="Davies P."/>
            <person name="de Pablos B."/>
            <person name="Delcher A."/>
            <person name="Deng Z."/>
            <person name="Mays A.D."/>
            <person name="Dew I."/>
            <person name="Dietz S.M."/>
            <person name="Dodson K."/>
            <person name="Doup L.E."/>
            <person name="Downes M."/>
            <person name="Dugan-Rocha S."/>
            <person name="Dunkov B.C."/>
            <person name="Dunn P."/>
            <person name="Durbin K.J."/>
            <person name="Evangelista C.C."/>
            <person name="Ferraz C."/>
            <person name="Ferriera S."/>
            <person name="Fleischmann W."/>
            <person name="Fosler C."/>
            <person name="Gabrielian A.E."/>
            <person name="Garg N.S."/>
            <person name="Gelbart W.M."/>
            <person name="Glasser K."/>
            <person name="Glodek A."/>
            <person name="Gong F."/>
            <person name="Gorrell J.H."/>
            <person name="Gu Z."/>
            <person name="Guan P."/>
            <person name="Harris M."/>
            <person name="Harris N.L."/>
            <person name="Harvey D.A."/>
            <person name="Heiman T.J."/>
            <person name="Hernandez J.R."/>
            <person name="Houck J."/>
            <person name="Hostin D."/>
            <person name="Houston K.A."/>
            <person name="Howland T.J."/>
            <person name="Wei M.-H."/>
            <person name="Ibegwam C."/>
            <person name="Jalali M."/>
            <person name="Kalush F."/>
            <person name="Karpen G.H."/>
            <person name="Ke Z."/>
            <person name="Kennison J.A."/>
            <person name="Ketchum K.A."/>
            <person name="Kimmel B.E."/>
            <person name="Kodira C.D."/>
            <person name="Kraft C.L."/>
            <person name="Kravitz S."/>
            <person name="Kulp D."/>
            <person name="Lai Z."/>
            <person name="Lasko P."/>
            <person name="Lei Y."/>
            <person name="Levitsky A.A."/>
            <person name="Li J.H."/>
            <person name="Li Z."/>
            <person name="Liang Y."/>
            <person name="Lin X."/>
            <person name="Liu X."/>
            <person name="Mattei B."/>
            <person name="McIntosh T.C."/>
            <person name="McLeod M.P."/>
            <person name="McPherson D."/>
            <person name="Merkulov G."/>
            <person name="Milshina N.V."/>
            <person name="Mobarry C."/>
            <person name="Morris J."/>
            <person name="Moshrefi A."/>
            <person name="Mount S.M."/>
            <person name="Moy M."/>
            <person name="Murphy B."/>
            <person name="Murphy L."/>
            <person name="Muzny D.M."/>
            <person name="Nelson D.L."/>
            <person name="Nelson D.R."/>
            <person name="Nelson K.A."/>
            <person name="Nixon K."/>
            <person name="Nusskern D.R."/>
            <person name="Pacleb J.M."/>
            <person name="Palazzolo M."/>
            <person name="Pittman G.S."/>
            <person name="Pan S."/>
            <person name="Pollard J."/>
            <person name="Puri V."/>
            <person name="Reese M.G."/>
            <person name="Reinert K."/>
            <person name="Remington K."/>
            <person name="Saunders R.D.C."/>
            <person name="Scheeler F."/>
            <person name="Shen H."/>
            <person name="Shue B.C."/>
            <person name="Siden-Kiamos I."/>
            <person name="Simpson M."/>
            <person name="Skupski M.P."/>
            <person name="Smith T.J."/>
            <person name="Spier E."/>
            <person name="Spradling A.C."/>
            <person name="Stapleton M."/>
            <person name="Strong R."/>
            <person name="Sun E."/>
            <person name="Svirskas R."/>
            <person name="Tector C."/>
            <person name="Turner R."/>
            <person name="Venter E."/>
            <person name="Wang A.H."/>
            <person name="Wang X."/>
            <person name="Wang Z.-Y."/>
            <person name="Wassarman D.A."/>
            <person name="Weinstock G.M."/>
            <person name="Weissenbach J."/>
            <person name="Williams S.M."/>
            <person name="Woodage T."/>
            <person name="Worley K.C."/>
            <person name="Wu D."/>
            <person name="Yang S."/>
            <person name="Yao Q.A."/>
            <person name="Ye J."/>
            <person name="Yeh R.-F."/>
            <person name="Zaveri J.S."/>
            <person name="Zhan M."/>
            <person name="Zhang G."/>
            <person name="Zhao Q."/>
            <person name="Zheng L."/>
            <person name="Zheng X.H."/>
            <person name="Zhong F.N."/>
            <person name="Zhong W."/>
            <person name="Zhou X."/>
            <person name="Zhu S.C."/>
            <person name="Zhu X."/>
            <person name="Smith H.O."/>
            <person name="Gibbs R.A."/>
            <person name="Myers E.W."/>
            <person name="Rubin G.M."/>
            <person name="Venter J.C."/>
        </authorList>
    </citation>
    <scope>NUCLEOTIDE SEQUENCE [LARGE SCALE GENOMIC DNA]</scope>
    <source>
        <strain>Berkeley</strain>
    </source>
</reference>
<reference key="2">
    <citation type="journal article" date="2002" name="Genome Biol.">
        <title>Annotation of the Drosophila melanogaster euchromatic genome: a systematic review.</title>
        <authorList>
            <person name="Misra S."/>
            <person name="Crosby M.A."/>
            <person name="Mungall C.J."/>
            <person name="Matthews B.B."/>
            <person name="Campbell K.S."/>
            <person name="Hradecky P."/>
            <person name="Huang Y."/>
            <person name="Kaminker J.S."/>
            <person name="Millburn G.H."/>
            <person name="Prochnik S.E."/>
            <person name="Smith C.D."/>
            <person name="Tupy J.L."/>
            <person name="Whitfield E.J."/>
            <person name="Bayraktaroglu L."/>
            <person name="Berman B.P."/>
            <person name="Bettencourt B.R."/>
            <person name="Celniker S.E."/>
            <person name="de Grey A.D.N.J."/>
            <person name="Drysdale R.A."/>
            <person name="Harris N.L."/>
            <person name="Richter J."/>
            <person name="Russo S."/>
            <person name="Schroeder A.J."/>
            <person name="Shu S.Q."/>
            <person name="Stapleton M."/>
            <person name="Yamada C."/>
            <person name="Ashburner M."/>
            <person name="Gelbart W.M."/>
            <person name="Rubin G.M."/>
            <person name="Lewis S.E."/>
        </authorList>
    </citation>
    <scope>GENOME REANNOTATION</scope>
    <source>
        <strain>Berkeley</strain>
    </source>
</reference>
<reference key="3">
    <citation type="submission" date="2011-04" db="EMBL/GenBank/DDBJ databases">
        <authorList>
            <person name="Carlson J."/>
            <person name="Booth B."/>
            <person name="Frise E."/>
            <person name="Sandler J."/>
            <person name="Wan K."/>
            <person name="Yu C."/>
            <person name="Celniker S.E."/>
        </authorList>
    </citation>
    <scope>NUCLEOTIDE SEQUENCE [LARGE SCALE MRNA]</scope>
</reference>
<reference key="4">
    <citation type="journal article" date="2006" name="Genes Genet. Syst.">
        <title>Involvement of Drosophila Sir2-like genes in the regulation of life span.</title>
        <authorList>
            <person name="Kusama S."/>
            <person name="Ueda R."/>
            <person name="Suda T."/>
            <person name="Nishihara S."/>
            <person name="Matsuura E.T."/>
        </authorList>
    </citation>
    <scope>FUNCTION</scope>
    <scope>DISRUPTION PHENOTYPE</scope>
</reference>
<reference key="5">
    <citation type="journal article" date="2022" name="Proc. Natl. Acad. Sci. U.S.A.">
        <title>Sirt6 regulates lifespan in Drosophila melanogaster.</title>
        <authorList>
            <person name="Taylor J.R."/>
            <person name="Wood J.G."/>
            <person name="Mizerak E."/>
            <person name="Hinthorn S."/>
            <person name="Liu J."/>
            <person name="Finn M."/>
            <person name="Gordon S."/>
            <person name="Zingas L."/>
            <person name="Chang C."/>
            <person name="Klein M.A."/>
            <person name="Denu J.M."/>
            <person name="Gorbunova V."/>
            <person name="Seluanov A."/>
            <person name="Boeke J.D."/>
            <person name="Sedivy J.M."/>
            <person name="Helfand S.L."/>
        </authorList>
    </citation>
    <scope>FUNCTION</scope>
    <scope>CATALYTIC ACTIVITY</scope>
    <scope>SUBCELLULAR LOCATION</scope>
    <scope>TISSUE SPECIFICITY</scope>
</reference>
<accession>Q9VH08</accession>
<accession>F3YD73</accession>
<proteinExistence type="evidence at protein level"/>
<sequence>MSCNYADGLSAYDNKGILGAPESFDSDEVVAEKCQELAELIKKSGHVVLHTGAGISTSAGIPDFRGPKGVWTLEEKGEKPDFNVSFDEARPTKTHMAIIALIESGYVQYVISQNIDGLHLKSGLDRKYLSELHGNIYIEQCKKCRRQFVSPSAVETVGQKSLQRACKSSMDSKGRSCRSGILYDNVLDWEHDLPENDLEMGVMHSTVADLNIALGTTLQIVPSGDLPLKNLKCGGKFVICNLQPTKHDKKANLIISSYVDVVLSKVCKLLGVEIPEYSEASDPTKQSKPMEWTIPTSNVNTFHRQYKKYVYFIYYLL</sequence>
<protein>
    <recommendedName>
        <fullName evidence="6">NAD-dependent protein deacetylase Sirt6</fullName>
        <ecNumber evidence="2 4">2.3.1.286</ecNumber>
    </recommendedName>
    <alternativeName>
        <fullName evidence="6">Regulatory protein SIR2 homolog 6</fullName>
        <shortName evidence="5">dSirt6</shortName>
    </alternativeName>
    <alternativeName>
        <fullName>SIR2-like protein 6</fullName>
    </alternativeName>
</protein>
<evidence type="ECO:0000250" key="1">
    <source>
        <dbReference type="UniProtKB" id="Q8N6T7"/>
    </source>
</evidence>
<evidence type="ECO:0000255" key="2">
    <source>
        <dbReference type="PROSITE-ProRule" id="PRU00236"/>
    </source>
</evidence>
<evidence type="ECO:0000269" key="3">
    <source>
    </source>
</evidence>
<evidence type="ECO:0000269" key="4">
    <source>
    </source>
</evidence>
<evidence type="ECO:0000303" key="5">
    <source>
    </source>
</evidence>
<evidence type="ECO:0000305" key="6"/>
<evidence type="ECO:0000312" key="7">
    <source>
        <dbReference type="FlyBase" id="FBgn0037802"/>
    </source>
</evidence>